<organism>
    <name type="scientific">Rattus norvegicus</name>
    <name type="common">Rat</name>
    <dbReference type="NCBI Taxonomy" id="10116"/>
    <lineage>
        <taxon>Eukaryota</taxon>
        <taxon>Metazoa</taxon>
        <taxon>Chordata</taxon>
        <taxon>Craniata</taxon>
        <taxon>Vertebrata</taxon>
        <taxon>Euteleostomi</taxon>
        <taxon>Mammalia</taxon>
        <taxon>Eutheria</taxon>
        <taxon>Euarchontoglires</taxon>
        <taxon>Glires</taxon>
        <taxon>Rodentia</taxon>
        <taxon>Myomorpha</taxon>
        <taxon>Muroidea</taxon>
        <taxon>Muridae</taxon>
        <taxon>Murinae</taxon>
        <taxon>Rattus</taxon>
    </lineage>
</organism>
<dbReference type="EMBL" id="AY030276">
    <property type="protein sequence ID" value="AAK51132.1"/>
    <property type="molecule type" value="mRNA"/>
</dbReference>
<dbReference type="RefSeq" id="NP_620246.1">
    <molecule id="Q924Y8-1"/>
    <property type="nucleotide sequence ID" value="NM_138891.2"/>
</dbReference>
<dbReference type="RefSeq" id="XP_017446091.1">
    <property type="nucleotide sequence ID" value="XM_017590602.1"/>
</dbReference>
<dbReference type="SMR" id="Q924Y8"/>
<dbReference type="FunCoup" id="Q924Y8">
    <property type="interactions" value="1"/>
</dbReference>
<dbReference type="STRING" id="10116.ENSRNOP00000019929"/>
<dbReference type="GlyCosmos" id="Q924Y8">
    <property type="glycosylation" value="3 sites, No reported glycans"/>
</dbReference>
<dbReference type="GlyGen" id="Q924Y8">
    <property type="glycosylation" value="4 sites"/>
</dbReference>
<dbReference type="PhosphoSitePlus" id="Q924Y8"/>
<dbReference type="PaxDb" id="10116-ENSRNOP00000019929"/>
<dbReference type="Ensembl" id="ENSRNOT00000019929.4">
    <molecule id="Q924Y8-1"/>
    <property type="protein sequence ID" value="ENSRNOP00000019929.2"/>
    <property type="gene ID" value="ENSRNOG00000014793.4"/>
</dbReference>
<dbReference type="GeneID" id="192251"/>
<dbReference type="KEGG" id="rno:192251"/>
<dbReference type="UCSC" id="RGD:619890">
    <molecule id="Q924Y8-1"/>
    <property type="organism name" value="rat"/>
</dbReference>
<dbReference type="AGR" id="RGD:619890"/>
<dbReference type="CTD" id="344758"/>
<dbReference type="RGD" id="619890">
    <property type="gene designation" value="Gpr149"/>
</dbReference>
<dbReference type="eggNOG" id="KOG0331">
    <property type="taxonomic scope" value="Eukaryota"/>
</dbReference>
<dbReference type="GeneTree" id="ENSGT00390000003715"/>
<dbReference type="HOGENOM" id="CLU_021967_0_0_1"/>
<dbReference type="InParanoid" id="Q924Y8"/>
<dbReference type="OMA" id="TKVVLWL"/>
<dbReference type="OrthoDB" id="71469at9989"/>
<dbReference type="PhylomeDB" id="Q924Y8"/>
<dbReference type="TreeFam" id="TF331679"/>
<dbReference type="PRO" id="PR:Q924Y8"/>
<dbReference type="Proteomes" id="UP000002494">
    <property type="component" value="Chromosome 2"/>
</dbReference>
<dbReference type="Bgee" id="ENSRNOG00000014793">
    <property type="expression patterns" value="Expressed in colon and 5 other cell types or tissues"/>
</dbReference>
<dbReference type="GO" id="GO:0043005">
    <property type="term" value="C:neuron projection"/>
    <property type="evidence" value="ECO:0000318"/>
    <property type="project" value="GO_Central"/>
</dbReference>
<dbReference type="GO" id="GO:0005886">
    <property type="term" value="C:plasma membrane"/>
    <property type="evidence" value="ECO:0000318"/>
    <property type="project" value="GO_Central"/>
</dbReference>
<dbReference type="GO" id="GO:0004930">
    <property type="term" value="F:G protein-coupled receptor activity"/>
    <property type="evidence" value="ECO:0000318"/>
    <property type="project" value="GO_Central"/>
</dbReference>
<dbReference type="GO" id="GO:0042923">
    <property type="term" value="F:neuropeptide binding"/>
    <property type="evidence" value="ECO:0000318"/>
    <property type="project" value="GO_Central"/>
</dbReference>
<dbReference type="GO" id="GO:0001547">
    <property type="term" value="P:antral ovarian follicle growth"/>
    <property type="evidence" value="ECO:0000266"/>
    <property type="project" value="RGD"/>
</dbReference>
<dbReference type="GO" id="GO:0060280">
    <property type="term" value="P:negative regulation of ovulation"/>
    <property type="evidence" value="ECO:0000266"/>
    <property type="project" value="RGD"/>
</dbReference>
<dbReference type="GO" id="GO:0007218">
    <property type="term" value="P:neuropeptide signaling pathway"/>
    <property type="evidence" value="ECO:0000318"/>
    <property type="project" value="GO_Central"/>
</dbReference>
<dbReference type="GO" id="GO:0001546">
    <property type="term" value="P:preantral ovarian follicle growth"/>
    <property type="evidence" value="ECO:0000266"/>
    <property type="project" value="RGD"/>
</dbReference>
<dbReference type="CDD" id="cd15011">
    <property type="entry name" value="7tmA_GPR149"/>
    <property type="match status" value="1"/>
</dbReference>
<dbReference type="Gene3D" id="1.20.1070.10">
    <property type="entry name" value="Rhodopsin 7-helix transmembrane proteins"/>
    <property type="match status" value="1"/>
</dbReference>
<dbReference type="InterPro" id="IPR017452">
    <property type="entry name" value="GPCR_Rhodpsn_7TM"/>
</dbReference>
<dbReference type="PANTHER" id="PTHR24229:SF32">
    <property type="entry name" value="G-PROTEIN COUPLED RECEPTOR 149-RELATED"/>
    <property type="match status" value="1"/>
</dbReference>
<dbReference type="PANTHER" id="PTHR24229">
    <property type="entry name" value="NEUROPEPTIDES RECEPTOR"/>
    <property type="match status" value="1"/>
</dbReference>
<dbReference type="SUPFAM" id="SSF81321">
    <property type="entry name" value="Family A G protein-coupled receptor-like"/>
    <property type="match status" value="1"/>
</dbReference>
<dbReference type="PROSITE" id="PS50262">
    <property type="entry name" value="G_PROTEIN_RECEP_F1_2"/>
    <property type="match status" value="1"/>
</dbReference>
<feature type="chain" id="PRO_0000069628" description="Probable G-protein coupled receptor 149">
    <location>
        <begin position="1"/>
        <end position="730"/>
    </location>
</feature>
<feature type="topological domain" description="Extracellular" evidence="1">
    <location>
        <begin position="1"/>
        <end position="34"/>
    </location>
</feature>
<feature type="transmembrane region" description="Helical; Name=1" evidence="1">
    <location>
        <begin position="35"/>
        <end position="55"/>
    </location>
</feature>
<feature type="topological domain" description="Cytoplasmic" evidence="1">
    <location>
        <begin position="56"/>
        <end position="68"/>
    </location>
</feature>
<feature type="transmembrane region" description="Helical; Name=2" evidence="1">
    <location>
        <begin position="69"/>
        <end position="89"/>
    </location>
</feature>
<feature type="topological domain" description="Extracellular" evidence="1">
    <location>
        <begin position="90"/>
        <end position="108"/>
    </location>
</feature>
<feature type="transmembrane region" description="Helical; Name=3" evidence="1">
    <location>
        <begin position="109"/>
        <end position="131"/>
    </location>
</feature>
<feature type="topological domain" description="Cytoplasmic" evidence="1">
    <location>
        <begin position="132"/>
        <end position="148"/>
    </location>
</feature>
<feature type="transmembrane region" description="Helical; Name=4" evidence="1">
    <location>
        <begin position="149"/>
        <end position="169"/>
    </location>
</feature>
<feature type="topological domain" description="Extracellular" evidence="1">
    <location>
        <begin position="170"/>
        <end position="188"/>
    </location>
</feature>
<feature type="transmembrane region" description="Helical; Name=5" evidence="1">
    <location>
        <begin position="189"/>
        <end position="209"/>
    </location>
</feature>
<feature type="topological domain" description="Cytoplasmic" evidence="1">
    <location>
        <begin position="210"/>
        <end position="308"/>
    </location>
</feature>
<feature type="transmembrane region" description="Helical; Name=6" evidence="1">
    <location>
        <begin position="309"/>
        <end position="329"/>
    </location>
</feature>
<feature type="topological domain" description="Extracellular" evidence="1">
    <location>
        <begin position="330"/>
        <end position="340"/>
    </location>
</feature>
<feature type="transmembrane region" description="Helical; Name=7" evidence="1">
    <location>
        <begin position="341"/>
        <end position="361"/>
    </location>
</feature>
<feature type="topological domain" description="Cytoplasmic" evidence="1">
    <location>
        <begin position="362"/>
        <end position="730"/>
    </location>
</feature>
<feature type="glycosylation site" description="N-linked (GlcNAc...) asparagine" evidence="1">
    <location>
        <position position="7"/>
    </location>
</feature>
<feature type="glycosylation site" description="N-linked (GlcNAc...) asparagine" evidence="1">
    <location>
        <position position="10"/>
    </location>
</feature>
<feature type="glycosylation site" description="N-linked (GlcNAc...) asparagine" evidence="1">
    <location>
        <position position="20"/>
    </location>
</feature>
<feature type="disulfide bond" evidence="2">
    <location>
        <begin position="104"/>
        <end position="181"/>
    </location>
</feature>
<accession>Q924Y8</accession>
<gene>
    <name type="primary">Gpr149</name>
    <name type="synonym">Ieda</name>
</gene>
<name>GP149_RAT</name>
<sequence>MSFFLSNLTNDSRLWKVSHNSTDLMNSPETLTLSLFCLICLMTLVALVGSIFSLVSLLTMQYRTVVSMLVTSWSVDDLLSVLSVAIFMVLQWPREAPGYFQSLCTTSALLYMCQGLSSNLKATLIVFYNFYTMHRTVVSQSSSWRSGQVLGVALTVWAVSLLLASLPLCGWGVFVRTPWGCLTDCSSPYVLLLFAVYASAFGLLAVLSVPLTHQLLCSEEPPRLHANYQEISRGASTPGTPAAGGRVLCLLPEDVEIPALPGTGSSLSSDMVFAPGQPAASSAGAGKRENLWTPRGSSSFPVSLAQKRFALILALTKVILWLPMMIHMVVKHVVGFQSLPVDMLSFLLTLLASTVTPVFVLSKRWAHLPCGCIINCQPDTYSVAFDGKKSKRKGFEFNLSFQQSYGLYKMTHADYYDDDDENPISYHNPKKYECEATKEPREDNHGVFNTITVEISTTPPLDSATLTGVNKCTNTDIPEPKQAVSEEKGAFSIKTECAINYGEATSFEGPERRLSHEETQKPDLSDWEWCRSKSERTPRQRSGGGLAIPICAFQGTVSLQAPTGKTLSLSTYEVSAEGQKITPPSKKIEVYRSKSVGHEPNSEESPSTFADTNVKIHLEVLEICDNDEALDTVSIISNISQSSTKVRSPSLRYSRKENRFVSCDLGETASYSLFLPTSDPDGDINISIPDTVEAHRQNSRRQHQDRDGYQEEIQLLNKAYRKREAESKGN</sequence>
<keyword id="KW-0025">Alternative splicing</keyword>
<keyword id="KW-1003">Cell membrane</keyword>
<keyword id="KW-1015">Disulfide bond</keyword>
<keyword id="KW-0297">G-protein coupled receptor</keyword>
<keyword id="KW-0325">Glycoprotein</keyword>
<keyword id="KW-0472">Membrane</keyword>
<keyword id="KW-0675">Receptor</keyword>
<keyword id="KW-1185">Reference proteome</keyword>
<keyword id="KW-0807">Transducer</keyword>
<keyword id="KW-0812">Transmembrane</keyword>
<keyword id="KW-1133">Transmembrane helix</keyword>
<evidence type="ECO:0000255" key="1"/>
<evidence type="ECO:0000255" key="2">
    <source>
        <dbReference type="PROSITE-ProRule" id="PRU00521"/>
    </source>
</evidence>
<evidence type="ECO:0000269" key="3">
    <source>
    </source>
</evidence>
<comment type="function">
    <text>Orphan receptor.</text>
</comment>
<comment type="subcellular location">
    <subcellularLocation>
        <location>Cell membrane</location>
        <topology>Multi-pass membrane protein</topology>
    </subcellularLocation>
</comment>
<comment type="alternative products">
    <event type="alternative splicing"/>
    <isoform>
        <id>Q924Y8-1</id>
        <name>1</name>
        <name>Ieda-L</name>
        <sequence type="displayed"/>
    </isoform>
    <text>A number of isoforms are produced.</text>
</comment>
<comment type="tissue specificity">
    <text evidence="3">Expressed exclusively in brain and testis.</text>
</comment>
<comment type="developmental stage">
    <text evidence="3">Appeared in the brain of 16 days-old embryos and was maintained during the subsequent developmental stages.</text>
</comment>
<comment type="induction">
    <text>Expression increased during the early steps of astrocyte differentiation.</text>
</comment>
<comment type="similarity">
    <text evidence="2">Belongs to the G-protein coupled receptor 1 family.</text>
</comment>
<reference key="1">
    <citation type="journal article" date="2002" name="J. Neurochem.">
        <title>A novel seven transmembrane receptor induced during the early steps of astrocyte differentiation identified by differential expression.</title>
        <authorList>
            <person name="De Smet C."/>
            <person name="Nishimori H."/>
            <person name="Furnari F.B."/>
            <person name="Boegler O."/>
            <person name="Huang H.-J.S."/>
            <person name="Cavenee W.K."/>
        </authorList>
    </citation>
    <scope>NUCLEOTIDE SEQUENCE [MRNA]</scope>
    <scope>TISSUE SPECIFICITY</scope>
    <scope>DEVELOPMENTAL STAGE</scope>
    <scope>ALTERNATIVE SPLICING</scope>
</reference>
<proteinExistence type="evidence at transcript level"/>
<protein>
    <recommendedName>
        <fullName>Probable G-protein coupled receptor 149</fullName>
    </recommendedName>
    <alternativeName>
        <fullName>Induced early in differentiating astrocytes gene protein</fullName>
    </alternativeName>
</protein>